<feature type="transit peptide" description="Mitochondrion" evidence="6">
    <location>
        <begin position="1"/>
        <end position="67"/>
    </location>
</feature>
<feature type="chain" id="PRO_0000020472" description="Dihydrolipoyllysine-residue succinyltransferase component of 2-oxoglutarate dehydrogenase complex, mitochondrial">
    <location>
        <begin position="68"/>
        <end position="453"/>
    </location>
</feature>
<feature type="domain" description="Lipoyl-binding" evidence="4">
    <location>
        <begin position="70"/>
        <end position="144"/>
    </location>
</feature>
<feature type="region of interest" description="Disordered" evidence="5">
    <location>
        <begin position="152"/>
        <end position="225"/>
    </location>
</feature>
<feature type="compositionally biased region" description="Low complexity" evidence="5">
    <location>
        <begin position="152"/>
        <end position="172"/>
    </location>
</feature>
<feature type="compositionally biased region" description="Pro residues" evidence="5">
    <location>
        <begin position="173"/>
        <end position="196"/>
    </location>
</feature>
<feature type="active site" evidence="8">
    <location>
        <position position="424"/>
    </location>
</feature>
<feature type="active site" evidence="3">
    <location>
        <position position="428"/>
    </location>
</feature>
<feature type="modified residue" description="Phosphoserine" evidence="2">
    <location>
        <position position="81"/>
    </location>
</feature>
<feature type="modified residue" description="N6-lipoyllysine" evidence="4">
    <location>
        <position position="110"/>
    </location>
</feature>
<feature type="modified residue" description="N6-acetyllysine" evidence="2">
    <location>
        <position position="154"/>
    </location>
</feature>
<feature type="modified residue" description="N6-acetyllysine" evidence="2">
    <location>
        <position position="267"/>
    </location>
</feature>
<feature type="modified residue" description="N6-acetyllysine" evidence="2">
    <location>
        <position position="272"/>
    </location>
</feature>
<feature type="modified residue" description="N6-acetyllysine" evidence="2">
    <location>
        <position position="273"/>
    </location>
</feature>
<feature type="modified residue" description="N6-acetyllysine" evidence="2">
    <location>
        <position position="277"/>
    </location>
</feature>
<feature type="modified residue" description="N6-acetyllysine" evidence="2">
    <location>
        <position position="307"/>
    </location>
</feature>
<feature type="splice variant" id="VSP_056439" description="In isoform 2." evidence="12">
    <original>MLSRSRCVSRAFSRSLSAFQKGN</original>
    <variation>MTWLQSKPQRLQNLSQREMSGGR</variation>
    <location>
        <begin position="1"/>
        <end position="23"/>
    </location>
</feature>
<feature type="splice variant" id="VSP_056440" description="In isoform 2." evidence="12">
    <location>
        <begin position="24"/>
        <end position="109"/>
    </location>
</feature>
<feature type="sequence variant" id="VAR_004976" evidence="10 11">
    <original>P</original>
    <variation>A</variation>
    <location>
        <position position="213"/>
    </location>
</feature>
<feature type="sequence variant" id="VAR_083034" description="In PPGL7; uncertain significance; not changed dihydrolipoyllysine-residue succinyltransferase activity; dbSNP:rs771616810." evidence="8">
    <original>R</original>
    <variation>Q</variation>
    <location>
        <position position="231"/>
    </location>
</feature>
<feature type="sequence variant" id="VAR_083035" description="Not changed dihydrolipoyllysine-residue succinyltransferase activity; dbSNP:rs373295097." evidence="8">
    <original>D</original>
    <variation>N</variation>
    <location>
        <position position="304"/>
    </location>
</feature>
<feature type="sequence variant" id="VAR_083036" description="In PPGL7; decreased dihydrolipoyllysine-residue succinyltransferase activity; dbSNP:rs1270341616." evidence="8">
    <original>G</original>
    <variation>E</variation>
    <location>
        <position position="374"/>
    </location>
</feature>
<feature type="sequence variant" id="VAR_004977">
    <original>P</original>
    <variation>T</variation>
    <location>
        <position position="384"/>
    </location>
</feature>
<feature type="sequence variant" id="VAR_083037" description="In PPGL7; uncertain significance; not changed dihydrolipoyllysine-residue succinyltransferase activity; dbSNP:rs778239022." evidence="8">
    <original>Y</original>
    <variation>C</variation>
    <location>
        <position position="422"/>
    </location>
</feature>
<feature type="mutagenesis site" description="Reduced nuclear localization of the 2-oxoglutarate dehydrogenase complex. Reduced histone succinylation." evidence="7">
    <original>REK</original>
    <variation>AEA</variation>
    <location>
        <begin position="224"/>
        <end position="226"/>
    </location>
</feature>
<feature type="mutagenesis site" description="Loss of dihydrolipoyllysine-residue succinyltransferase activity." evidence="8">
    <original>H</original>
    <variation>A</variation>
    <location>
        <position position="424"/>
    </location>
</feature>
<feature type="sequence conflict" description="In Ref. 1; BAA03871, 2; BAA05536 and 3; AAB59629." evidence="13" ref="1 2 3">
    <original>RS</original>
    <variation>AP</variation>
    <location>
        <begin position="14"/>
        <end position="15"/>
    </location>
</feature>
<feature type="sequence conflict" description="In Ref. 1; BAA03871." evidence="13" ref="1">
    <original>G</original>
    <variation>T</variation>
    <location>
        <position position="132"/>
    </location>
</feature>
<feature type="sequence conflict" description="In Ref. 1; BAA03871 and 2; BAA05536." evidence="13" ref="1 2">
    <original>E</original>
    <variation>D</variation>
    <location>
        <position position="212"/>
    </location>
</feature>
<feature type="sequence conflict" description="In Ref. 2; BAA05536." evidence="13" ref="2">
    <original>R</original>
    <variation>T</variation>
    <location>
        <position position="312"/>
    </location>
</feature>
<feature type="helix" evidence="17">
    <location>
        <begin position="229"/>
        <end position="238"/>
    </location>
</feature>
<feature type="turn" evidence="17">
    <location>
        <begin position="239"/>
        <end position="244"/>
    </location>
</feature>
<feature type="strand" evidence="17">
    <location>
        <begin position="247"/>
        <end position="255"/>
    </location>
</feature>
<feature type="helix" evidence="17">
    <location>
        <begin position="257"/>
        <end position="260"/>
    </location>
</feature>
<feature type="helix" evidence="17">
    <location>
        <begin position="262"/>
        <end position="265"/>
    </location>
</feature>
<feature type="helix" evidence="17">
    <location>
        <begin position="267"/>
        <end position="274"/>
    </location>
</feature>
<feature type="helix" evidence="17">
    <location>
        <begin position="282"/>
        <end position="294"/>
    </location>
</feature>
<feature type="helix" evidence="17">
    <location>
        <begin position="296"/>
        <end position="299"/>
    </location>
</feature>
<feature type="strand" evidence="17">
    <location>
        <begin position="301"/>
        <end position="303"/>
    </location>
</feature>
<feature type="turn" evidence="17">
    <location>
        <begin position="304"/>
        <end position="307"/>
    </location>
</feature>
<feature type="strand" evidence="17">
    <location>
        <begin position="308"/>
        <end position="310"/>
    </location>
</feature>
<feature type="strand" evidence="17">
    <location>
        <begin position="316"/>
        <end position="319"/>
    </location>
</feature>
<feature type="strand" evidence="17">
    <location>
        <begin position="321"/>
        <end position="323"/>
    </location>
</feature>
<feature type="strand" evidence="17">
    <location>
        <begin position="326"/>
        <end position="328"/>
    </location>
</feature>
<feature type="strand" evidence="17">
    <location>
        <begin position="331"/>
        <end position="333"/>
    </location>
</feature>
<feature type="helix" evidence="17">
    <location>
        <begin position="335"/>
        <end position="337"/>
    </location>
</feature>
<feature type="helix" evidence="17">
    <location>
        <begin position="342"/>
        <end position="355"/>
    </location>
</feature>
<feature type="helix" evidence="17">
    <location>
        <begin position="361"/>
        <end position="364"/>
    </location>
</feature>
<feature type="strand" evidence="17">
    <location>
        <begin position="370"/>
        <end position="373"/>
    </location>
</feature>
<feature type="turn" evidence="17">
    <location>
        <begin position="375"/>
        <end position="378"/>
    </location>
</feature>
<feature type="strand" evidence="17">
    <location>
        <begin position="391"/>
        <end position="423"/>
    </location>
</feature>
<feature type="turn" evidence="17">
    <location>
        <begin position="424"/>
        <end position="426"/>
    </location>
</feature>
<feature type="helix" evidence="17">
    <location>
        <begin position="430"/>
        <end position="444"/>
    </location>
</feature>
<feature type="helix" evidence="17">
    <location>
        <begin position="448"/>
        <end position="451"/>
    </location>
</feature>
<keyword id="KW-0002">3D-structure</keyword>
<keyword id="KW-0007">Acetylation</keyword>
<keyword id="KW-0012">Acyltransferase</keyword>
<keyword id="KW-0025">Alternative splicing</keyword>
<keyword id="KW-0903">Direct protein sequencing</keyword>
<keyword id="KW-0225">Disease variant</keyword>
<keyword id="KW-0450">Lipoyl</keyword>
<keyword id="KW-0496">Mitochondrion</keyword>
<keyword id="KW-0539">Nucleus</keyword>
<keyword id="KW-0597">Phosphoprotein</keyword>
<keyword id="KW-1267">Proteomics identification</keyword>
<keyword id="KW-1185">Reference proteome</keyword>
<keyword id="KW-0808">Transferase</keyword>
<keyword id="KW-0809">Transit peptide</keyword>
<keyword id="KW-0816">Tricarboxylic acid cycle</keyword>
<accession>P36957</accession>
<accession>B7Z5W8</accession>
<accession>E7ESY5</accession>
<accession>Q7LDY7</accession>
<accession>Q9BQ32</accession>
<sequence>MLSRSRCVSRAFSRSLSAFQKGNCPLGRRSLPGVSLCQGPGYPNSRKVVINNSVFSVRFFRTTAVCKDDLVTVKTPAFAESVTEGDVRWEKAVGDTVAEDEVVCEIETDKTSVQVPSPANGVIEALLVPDGGKVEGGTPLFTLRKTGAAPAKAKPAEAPAAAAPKAEPTAAAVPPPAAPIPTQMPPVPSPSQPPSGKPVSAVKPTVAPPLAEPGAGKGLRSEHREKMNRMRQRIAQRLKEAQNTCAMLTTFNEIDMSNIQEMRARHKEAFLKKHNLKLGFMSAFVKASAFALQEQPVVNAVIDDTTKEVVYRDYIDISVAVATPRGLVVPVIRNVEAMNFADIERTITELGEKARKNELAIEDMDGGTFTISNGGVFGSLFGTPIINPPQSAILGMHGIFDRPVAIGGKVEVRPMMYVALTYDHRLIDGREAVTFLRKIKAAVEDPRVLLLDL</sequence>
<name>ODO2_HUMAN</name>
<evidence type="ECO:0000250" key="1">
    <source>
        <dbReference type="UniProtKB" id="P11179"/>
    </source>
</evidence>
<evidence type="ECO:0000250" key="2">
    <source>
        <dbReference type="UniProtKB" id="Q9D2G2"/>
    </source>
</evidence>
<evidence type="ECO:0000250" key="3">
    <source>
        <dbReference type="UniProtKB" id="Q9N0F1"/>
    </source>
</evidence>
<evidence type="ECO:0000255" key="4">
    <source>
        <dbReference type="PROSITE-ProRule" id="PRU01066"/>
    </source>
</evidence>
<evidence type="ECO:0000256" key="5">
    <source>
        <dbReference type="SAM" id="MobiDB-lite"/>
    </source>
</evidence>
<evidence type="ECO:0000269" key="6">
    <source>
    </source>
</evidence>
<evidence type="ECO:0000269" key="7">
    <source>
    </source>
</evidence>
<evidence type="ECO:0000269" key="8">
    <source>
    </source>
</evidence>
<evidence type="ECO:0000269" key="9">
    <source>
    </source>
</evidence>
<evidence type="ECO:0000269" key="10">
    <source>
    </source>
</evidence>
<evidence type="ECO:0000269" key="11">
    <source>
    </source>
</evidence>
<evidence type="ECO:0000303" key="12">
    <source>
    </source>
</evidence>
<evidence type="ECO:0000305" key="13"/>
<evidence type="ECO:0000305" key="14">
    <source>
    </source>
</evidence>
<evidence type="ECO:0000305" key="15">
    <source>
    </source>
</evidence>
<evidence type="ECO:0000312" key="16">
    <source>
        <dbReference type="HGNC" id="HGNC:2911"/>
    </source>
</evidence>
<evidence type="ECO:0007829" key="17">
    <source>
        <dbReference type="PDB" id="6H05"/>
    </source>
</evidence>
<gene>
    <name evidence="16" type="primary">DLST</name>
    <name type="synonym">DLTS</name>
</gene>
<protein>
    <recommendedName>
        <fullName evidence="13">Dihydrolipoyllysine-residue succinyltransferase component of 2-oxoglutarate dehydrogenase complex, mitochondrial</fullName>
        <ecNumber evidence="8">2.3.1.61</ecNumber>
    </recommendedName>
    <alternativeName>
        <fullName>2-oxoglutarate dehydrogenase complex component E2</fullName>
        <shortName>OGDC-E2</shortName>
    </alternativeName>
    <alternativeName>
        <fullName>Dihydrolipoamide succinyltransferase component of 2-oxoglutarate dehydrogenase complex</fullName>
    </alternativeName>
    <alternativeName>
        <fullName>E2K</fullName>
    </alternativeName>
</protein>
<proteinExistence type="evidence at protein level"/>
<dbReference type="EC" id="2.3.1.61" evidence="8"/>
<dbReference type="EMBL" id="D16373">
    <property type="protein sequence ID" value="BAA03871.1"/>
    <property type="molecule type" value="mRNA"/>
</dbReference>
<dbReference type="EMBL" id="D26535">
    <property type="protein sequence ID" value="BAA05536.1"/>
    <property type="molecule type" value="Genomic_DNA"/>
</dbReference>
<dbReference type="EMBL" id="L37418">
    <property type="protein sequence ID" value="AAB59629.1"/>
    <property type="molecule type" value="mRNA"/>
</dbReference>
<dbReference type="EMBL" id="AK289414">
    <property type="protein sequence ID" value="BAF82103.1"/>
    <property type="molecule type" value="mRNA"/>
</dbReference>
<dbReference type="EMBL" id="AK299505">
    <property type="protein sequence ID" value="BAH13054.1"/>
    <property type="molecule type" value="mRNA"/>
</dbReference>
<dbReference type="EMBL" id="AC006530">
    <property type="protein sequence ID" value="AAD30181.1"/>
    <property type="molecule type" value="Genomic_DNA"/>
</dbReference>
<dbReference type="EMBL" id="CH471061">
    <property type="protein sequence ID" value="EAW81199.1"/>
    <property type="molecule type" value="Genomic_DNA"/>
</dbReference>
<dbReference type="EMBL" id="BC000302">
    <property type="protein sequence ID" value="AAH00302.1"/>
    <property type="molecule type" value="mRNA"/>
</dbReference>
<dbReference type="EMBL" id="BC001922">
    <property type="protein sequence ID" value="AAH01922.1"/>
    <property type="molecule type" value="mRNA"/>
</dbReference>
<dbReference type="CCDS" id="CCDS9833.1">
    <molecule id="P36957-1"/>
</dbReference>
<dbReference type="PIR" id="S39786">
    <property type="entry name" value="PN0673"/>
</dbReference>
<dbReference type="RefSeq" id="NP_001924.2">
    <molecule id="P36957-1"/>
    <property type="nucleotide sequence ID" value="NM_001933.4"/>
</dbReference>
<dbReference type="PDB" id="6H05">
    <property type="method" value="EM"/>
    <property type="resolution" value="2.90 A"/>
    <property type="chains" value="A=68-453"/>
</dbReference>
<dbReference type="PDBsum" id="6H05"/>
<dbReference type="EMDB" id="EMD-0108"/>
<dbReference type="EMDB" id="EMD-10556"/>
<dbReference type="EMDB" id="EMD-11014"/>
<dbReference type="SMR" id="P36957"/>
<dbReference type="BioGRID" id="108087">
    <property type="interactions" value="486"/>
</dbReference>
<dbReference type="ComplexPortal" id="CPX-9061">
    <property type="entry name" value="Mitochondrial 2-oxoglutarate dehydrogenase complex"/>
</dbReference>
<dbReference type="CORUM" id="P36957"/>
<dbReference type="FunCoup" id="P36957">
    <property type="interactions" value="3101"/>
</dbReference>
<dbReference type="IntAct" id="P36957">
    <property type="interactions" value="387"/>
</dbReference>
<dbReference type="MINT" id="P36957"/>
<dbReference type="STRING" id="9606.ENSP00000335304"/>
<dbReference type="GlyGen" id="P36957">
    <property type="glycosylation" value="3 sites, 1 O-linked glycan (2 sites)"/>
</dbReference>
<dbReference type="iPTMnet" id="P36957"/>
<dbReference type="MetOSite" id="P36957"/>
<dbReference type="PhosphoSitePlus" id="P36957"/>
<dbReference type="SwissPalm" id="P36957"/>
<dbReference type="BioMuta" id="DLST"/>
<dbReference type="DMDM" id="317373578"/>
<dbReference type="OGP" id="P36957"/>
<dbReference type="CPTAC" id="CPTAC-2756"/>
<dbReference type="jPOST" id="P36957"/>
<dbReference type="MassIVE" id="P36957"/>
<dbReference type="PaxDb" id="9606-ENSP00000335304"/>
<dbReference type="PeptideAtlas" id="P36957"/>
<dbReference type="ProteomicsDB" id="55248">
    <molecule id="P36957-1"/>
</dbReference>
<dbReference type="ProteomicsDB" id="6726"/>
<dbReference type="Pumba" id="P36957"/>
<dbReference type="TopDownProteomics" id="P36957-1">
    <molecule id="P36957-1"/>
</dbReference>
<dbReference type="ABCD" id="P36957">
    <property type="antibodies" value="1 sequenced antibody"/>
</dbReference>
<dbReference type="Antibodypedia" id="45">
    <property type="antibodies" value="200 antibodies from 29 providers"/>
</dbReference>
<dbReference type="DNASU" id="1743"/>
<dbReference type="Ensembl" id="ENST00000334220.9">
    <molecule id="P36957-1"/>
    <property type="protein sequence ID" value="ENSP00000335304.4"/>
    <property type="gene ID" value="ENSG00000119689.15"/>
</dbReference>
<dbReference type="GeneID" id="1743"/>
<dbReference type="KEGG" id="hsa:1743"/>
<dbReference type="MANE-Select" id="ENST00000334220.9">
    <property type="protein sequence ID" value="ENSP00000335304.4"/>
    <property type="RefSeq nucleotide sequence ID" value="NM_001933.5"/>
    <property type="RefSeq protein sequence ID" value="NP_001924.2"/>
</dbReference>
<dbReference type="UCSC" id="uc001xqv.3">
    <molecule id="P36957-1"/>
    <property type="organism name" value="human"/>
</dbReference>
<dbReference type="AGR" id="HGNC:2911"/>
<dbReference type="CTD" id="1743"/>
<dbReference type="DisGeNET" id="1743"/>
<dbReference type="GeneCards" id="DLST"/>
<dbReference type="HGNC" id="HGNC:2911">
    <property type="gene designation" value="DLST"/>
</dbReference>
<dbReference type="HPA" id="ENSG00000119689">
    <property type="expression patterns" value="Low tissue specificity"/>
</dbReference>
<dbReference type="MalaCards" id="DLST"/>
<dbReference type="MIM" id="126063">
    <property type="type" value="gene"/>
</dbReference>
<dbReference type="MIM" id="618475">
    <property type="type" value="phenotype"/>
</dbReference>
<dbReference type="neXtProt" id="NX_P36957"/>
<dbReference type="OpenTargets" id="ENSG00000119689"/>
<dbReference type="Orphanet" id="29072">
    <property type="disease" value="Hereditary pheochromocytoma-paraganglioma"/>
</dbReference>
<dbReference type="PharmGKB" id="PA27367"/>
<dbReference type="VEuPathDB" id="HostDB:ENSG00000119689"/>
<dbReference type="eggNOG" id="KOG0559">
    <property type="taxonomic scope" value="Eukaryota"/>
</dbReference>
<dbReference type="GeneTree" id="ENSGT00930000151014"/>
<dbReference type="HOGENOM" id="CLU_016733_0_0_1"/>
<dbReference type="InParanoid" id="P36957"/>
<dbReference type="OMA" id="NMPQTAV"/>
<dbReference type="OrthoDB" id="5391403at2759"/>
<dbReference type="PAN-GO" id="P36957">
    <property type="GO annotations" value="3 GO annotations based on evolutionary models"/>
</dbReference>
<dbReference type="PhylomeDB" id="P36957"/>
<dbReference type="TreeFam" id="TF314164"/>
<dbReference type="BioCyc" id="MetaCyc:HS04324-MONOMER"/>
<dbReference type="BRENDA" id="1.2.1.105">
    <property type="organism ID" value="2681"/>
</dbReference>
<dbReference type="PathwayCommons" id="P36957"/>
<dbReference type="Reactome" id="R-HSA-6783984">
    <property type="pathway name" value="Glycine degradation"/>
</dbReference>
<dbReference type="Reactome" id="R-HSA-9853506">
    <property type="pathway name" value="OGDH complex synthesizes succinyl-CoA from 2-OG"/>
</dbReference>
<dbReference type="Reactome" id="R-HSA-9857492">
    <property type="pathway name" value="Protein lipoylation"/>
</dbReference>
<dbReference type="Reactome" id="R-HSA-9858328">
    <property type="pathway name" value="OADH complex synthesizes glutaryl-CoA from 2-OA"/>
</dbReference>
<dbReference type="SABIO-RK" id="P36957"/>
<dbReference type="SignaLink" id="P36957"/>
<dbReference type="SIGNOR" id="P36957"/>
<dbReference type="UniPathway" id="UPA00223"/>
<dbReference type="UniPathway" id="UPA00868">
    <property type="reaction ID" value="UER00840"/>
</dbReference>
<dbReference type="BioGRID-ORCS" id="1743">
    <property type="hits" value="242 hits in 1166 CRISPR screens"/>
</dbReference>
<dbReference type="CD-CODE" id="91857CE7">
    <property type="entry name" value="Nucleolus"/>
</dbReference>
<dbReference type="CD-CODE" id="FB4E32DD">
    <property type="entry name" value="Presynaptic clusters and postsynaptic densities"/>
</dbReference>
<dbReference type="ChiTaRS" id="DLST">
    <property type="organism name" value="human"/>
</dbReference>
<dbReference type="GeneWiki" id="DLST"/>
<dbReference type="GenomeRNAi" id="1743"/>
<dbReference type="Pharos" id="P36957">
    <property type="development level" value="Tbio"/>
</dbReference>
<dbReference type="PRO" id="PR:P36957"/>
<dbReference type="Proteomes" id="UP000005640">
    <property type="component" value="Chromosome 14"/>
</dbReference>
<dbReference type="RNAct" id="P36957">
    <property type="molecule type" value="protein"/>
</dbReference>
<dbReference type="Bgee" id="ENSG00000119689">
    <property type="expression patterns" value="Expressed in apex of heart and 202 other cell types or tissues"/>
</dbReference>
<dbReference type="ExpressionAtlas" id="P36957">
    <property type="expression patterns" value="baseline and differential"/>
</dbReference>
<dbReference type="GO" id="GO:0005829">
    <property type="term" value="C:cytosol"/>
    <property type="evidence" value="ECO:0000314"/>
    <property type="project" value="HPA"/>
</dbReference>
<dbReference type="GO" id="GO:0016020">
    <property type="term" value="C:membrane"/>
    <property type="evidence" value="ECO:0007005"/>
    <property type="project" value="UniProtKB"/>
</dbReference>
<dbReference type="GO" id="GO:0005759">
    <property type="term" value="C:mitochondrial matrix"/>
    <property type="evidence" value="ECO:0000304"/>
    <property type="project" value="Reactome"/>
</dbReference>
<dbReference type="GO" id="GO:0005739">
    <property type="term" value="C:mitochondrion"/>
    <property type="evidence" value="ECO:0000314"/>
    <property type="project" value="HPA"/>
</dbReference>
<dbReference type="GO" id="GO:0005654">
    <property type="term" value="C:nucleoplasm"/>
    <property type="evidence" value="ECO:0000314"/>
    <property type="project" value="HPA"/>
</dbReference>
<dbReference type="GO" id="GO:0005634">
    <property type="term" value="C:nucleus"/>
    <property type="evidence" value="ECO:0000314"/>
    <property type="project" value="UniProtKB"/>
</dbReference>
<dbReference type="GO" id="GO:0160167">
    <property type="term" value="C:oxoadipate dehydrogenase complex"/>
    <property type="evidence" value="ECO:0000314"/>
    <property type="project" value="FlyBase"/>
</dbReference>
<dbReference type="GO" id="GO:0045252">
    <property type="term" value="C:oxoglutarate dehydrogenase complex"/>
    <property type="evidence" value="ECO:0000314"/>
    <property type="project" value="UniProtKB"/>
</dbReference>
<dbReference type="GO" id="GO:0016746">
    <property type="term" value="F:acyltransferase activity"/>
    <property type="evidence" value="ECO:0000315"/>
    <property type="project" value="UniProtKB"/>
</dbReference>
<dbReference type="GO" id="GO:0004149">
    <property type="term" value="F:dihydrolipoyllysine-residue succinyltransferase activity"/>
    <property type="evidence" value="ECO:0000315"/>
    <property type="project" value="UniProtKB"/>
</dbReference>
<dbReference type="GO" id="GO:0006103">
    <property type="term" value="P:2-oxoglutarate metabolic process"/>
    <property type="evidence" value="ECO:0000250"/>
    <property type="project" value="UniProtKB"/>
</dbReference>
<dbReference type="GO" id="GO:0006091">
    <property type="term" value="P:generation of precursor metabolites and energy"/>
    <property type="evidence" value="ECO:0000304"/>
    <property type="project" value="ProtInc"/>
</dbReference>
<dbReference type="GO" id="GO:0033512">
    <property type="term" value="P:L-lysine catabolic process to acetyl-CoA via saccharopine"/>
    <property type="evidence" value="ECO:0007669"/>
    <property type="project" value="UniProtKB-UniPathway"/>
</dbReference>
<dbReference type="GO" id="GO:0006104">
    <property type="term" value="P:succinyl-CoA metabolic process"/>
    <property type="evidence" value="ECO:0000250"/>
    <property type="project" value="UniProtKB"/>
</dbReference>
<dbReference type="GO" id="GO:0006099">
    <property type="term" value="P:tricarboxylic acid cycle"/>
    <property type="evidence" value="ECO:0000315"/>
    <property type="project" value="UniProtKB"/>
</dbReference>
<dbReference type="CDD" id="cd06849">
    <property type="entry name" value="lipoyl_domain"/>
    <property type="match status" value="1"/>
</dbReference>
<dbReference type="FunFam" id="2.40.50.100:FF:000033">
    <property type="entry name" value="Dihydrolipoyllysine-residue succinyltransferase component of 2-oxoglutarate dehydrogenase complex, mitochondrial"/>
    <property type="match status" value="1"/>
</dbReference>
<dbReference type="FunFam" id="3.30.559.10:FF:000006">
    <property type="entry name" value="Dihydrolipoyllysine-residue succinyltransferase component of 2-oxoglutarate dehydrogenase complex, mitochondrial"/>
    <property type="match status" value="1"/>
</dbReference>
<dbReference type="Gene3D" id="2.40.50.100">
    <property type="match status" value="1"/>
</dbReference>
<dbReference type="Gene3D" id="3.30.559.10">
    <property type="entry name" value="Chloramphenicol acetyltransferase-like domain"/>
    <property type="match status" value="1"/>
</dbReference>
<dbReference type="InterPro" id="IPR003016">
    <property type="entry name" value="2-oxoA_DH_lipoyl-BS"/>
</dbReference>
<dbReference type="InterPro" id="IPR050537">
    <property type="entry name" value="2-oxoacid_dehydrogenase"/>
</dbReference>
<dbReference type="InterPro" id="IPR001078">
    <property type="entry name" value="2-oxoacid_DH_actylTfrase"/>
</dbReference>
<dbReference type="InterPro" id="IPR000089">
    <property type="entry name" value="Biotin_lipoyl"/>
</dbReference>
<dbReference type="InterPro" id="IPR023213">
    <property type="entry name" value="CAT-like_dom_sf"/>
</dbReference>
<dbReference type="InterPro" id="IPR011053">
    <property type="entry name" value="Single_hybrid_motif"/>
</dbReference>
<dbReference type="InterPro" id="IPR006255">
    <property type="entry name" value="SucB"/>
</dbReference>
<dbReference type="NCBIfam" id="TIGR01347">
    <property type="entry name" value="sucB"/>
    <property type="match status" value="1"/>
</dbReference>
<dbReference type="PANTHER" id="PTHR43416:SF18">
    <property type="entry name" value="DIHYDROLIPOYLLYSINE-RESIDUE SUCCINYLTRANSFERASE COMPONENT OF 2-OXOGLUTARATE DEHYDROGENASE COMPLEX, MITOCHONDRIAL"/>
    <property type="match status" value="1"/>
</dbReference>
<dbReference type="PANTHER" id="PTHR43416">
    <property type="entry name" value="DIHYDROLIPOYLLYSINE-RESIDUE SUCCINYLTRANSFERASE COMPONENT OF 2-OXOGLUTARATE DEHYDROGENASE COMPLEX, MITOCHONDRIAL-RELATED"/>
    <property type="match status" value="1"/>
</dbReference>
<dbReference type="Pfam" id="PF00198">
    <property type="entry name" value="2-oxoacid_dh"/>
    <property type="match status" value="1"/>
</dbReference>
<dbReference type="Pfam" id="PF00364">
    <property type="entry name" value="Biotin_lipoyl"/>
    <property type="match status" value="1"/>
</dbReference>
<dbReference type="SUPFAM" id="SSF52777">
    <property type="entry name" value="CoA-dependent acyltransferases"/>
    <property type="match status" value="1"/>
</dbReference>
<dbReference type="SUPFAM" id="SSF51230">
    <property type="entry name" value="Single hybrid motif"/>
    <property type="match status" value="1"/>
</dbReference>
<dbReference type="PROSITE" id="PS50968">
    <property type="entry name" value="BIOTINYL_LIPOYL"/>
    <property type="match status" value="1"/>
</dbReference>
<dbReference type="PROSITE" id="PS00189">
    <property type="entry name" value="LIPOYL"/>
    <property type="match status" value="1"/>
</dbReference>
<reference key="1">
    <citation type="journal article" date="1993" name="Biochim. Biophys. Acta">
        <title>Human dihydrolipoamide succinyltransferase: cDNA cloning and localization on chromosome 14q24.2-q24.3.</title>
        <authorList>
            <person name="Nakano K."/>
            <person name="Matsuda S."/>
            <person name="Sakamoto T."/>
            <person name="Takase C."/>
            <person name="Nakagawa S."/>
            <person name="Ohta S."/>
            <person name="Ariyama T."/>
            <person name="Inazawa J."/>
            <person name="Abe T."/>
            <person name="Miyata T."/>
        </authorList>
    </citation>
    <scope>NUCLEOTIDE SEQUENCE [MRNA] (ISOFORM 1)</scope>
    <scope>VARIANT ALA-213</scope>
</reference>
<reference key="2">
    <citation type="journal article" date="1994" name="Eur. J. Biochem.">
        <title>Isolation, characterization and structural organization of the gene and pseudogene for the dihydrolipoamide succinyltransferase component of the human 2-oxoglutarate dehydrogenase complex.</title>
        <authorList>
            <person name="Nakano K."/>
            <person name="Takase C."/>
            <person name="Sakamoto T."/>
            <person name="Nakagawa S."/>
            <person name="Inazawa J."/>
            <person name="Ohta S."/>
            <person name="Matuda S."/>
        </authorList>
    </citation>
    <scope>NUCLEOTIDE SEQUENCE [GENOMIC DNA]</scope>
    <scope>VARIANT ALA-213</scope>
    <source>
        <tissue>Peripheral blood</tissue>
    </source>
</reference>
<reference key="3">
    <citation type="submission" date="1995-05" db="EMBL/GenBank/DDBJ databases">
        <title>Physical mapping and nucleotide sequence analysis of the human dihydrolipoamide succinyltransferase gene.</title>
        <authorList>
            <person name="Keryanov S."/>
            <person name="Liang Y."/>
            <person name="Rogaev E.I."/>
            <person name="Sherrington R."/>
            <person name="Tsuda T."/>
            <person name="Rogaeva E."/>
            <person name="Chi H."/>
            <person name="Crapper-Mclachlan D."/>
            <person name="Chumakov Y."/>
            <person name="Rommens J.M."/>
            <person name="St George-Hyslop P.H."/>
        </authorList>
    </citation>
    <scope>NUCLEOTIDE SEQUENCE [MRNA] (ISOFORM 1)</scope>
    <source>
        <tissue>Fetal brain</tissue>
    </source>
</reference>
<reference key="4">
    <citation type="journal article" date="2004" name="Nat. Genet.">
        <title>Complete sequencing and characterization of 21,243 full-length human cDNAs.</title>
        <authorList>
            <person name="Ota T."/>
            <person name="Suzuki Y."/>
            <person name="Nishikawa T."/>
            <person name="Otsuki T."/>
            <person name="Sugiyama T."/>
            <person name="Irie R."/>
            <person name="Wakamatsu A."/>
            <person name="Hayashi K."/>
            <person name="Sato H."/>
            <person name="Nagai K."/>
            <person name="Kimura K."/>
            <person name="Makita H."/>
            <person name="Sekine M."/>
            <person name="Obayashi M."/>
            <person name="Nishi T."/>
            <person name="Shibahara T."/>
            <person name="Tanaka T."/>
            <person name="Ishii S."/>
            <person name="Yamamoto J."/>
            <person name="Saito K."/>
            <person name="Kawai Y."/>
            <person name="Isono Y."/>
            <person name="Nakamura Y."/>
            <person name="Nagahari K."/>
            <person name="Murakami K."/>
            <person name="Yasuda T."/>
            <person name="Iwayanagi T."/>
            <person name="Wagatsuma M."/>
            <person name="Shiratori A."/>
            <person name="Sudo H."/>
            <person name="Hosoiri T."/>
            <person name="Kaku Y."/>
            <person name="Kodaira H."/>
            <person name="Kondo H."/>
            <person name="Sugawara M."/>
            <person name="Takahashi M."/>
            <person name="Kanda K."/>
            <person name="Yokoi T."/>
            <person name="Furuya T."/>
            <person name="Kikkawa E."/>
            <person name="Omura Y."/>
            <person name="Abe K."/>
            <person name="Kamihara K."/>
            <person name="Katsuta N."/>
            <person name="Sato K."/>
            <person name="Tanikawa M."/>
            <person name="Yamazaki M."/>
            <person name="Ninomiya K."/>
            <person name="Ishibashi T."/>
            <person name="Yamashita H."/>
            <person name="Murakawa K."/>
            <person name="Fujimori K."/>
            <person name="Tanai H."/>
            <person name="Kimata M."/>
            <person name="Watanabe M."/>
            <person name="Hiraoka S."/>
            <person name="Chiba Y."/>
            <person name="Ishida S."/>
            <person name="Ono Y."/>
            <person name="Takiguchi S."/>
            <person name="Watanabe S."/>
            <person name="Yosida M."/>
            <person name="Hotuta T."/>
            <person name="Kusano J."/>
            <person name="Kanehori K."/>
            <person name="Takahashi-Fujii A."/>
            <person name="Hara H."/>
            <person name="Tanase T.-O."/>
            <person name="Nomura Y."/>
            <person name="Togiya S."/>
            <person name="Komai F."/>
            <person name="Hara R."/>
            <person name="Takeuchi K."/>
            <person name="Arita M."/>
            <person name="Imose N."/>
            <person name="Musashino K."/>
            <person name="Yuuki H."/>
            <person name="Oshima A."/>
            <person name="Sasaki N."/>
            <person name="Aotsuka S."/>
            <person name="Yoshikawa Y."/>
            <person name="Matsunawa H."/>
            <person name="Ichihara T."/>
            <person name="Shiohata N."/>
            <person name="Sano S."/>
            <person name="Moriya S."/>
            <person name="Momiyama H."/>
            <person name="Satoh N."/>
            <person name="Takami S."/>
            <person name="Terashima Y."/>
            <person name="Suzuki O."/>
            <person name="Nakagawa S."/>
            <person name="Senoh A."/>
            <person name="Mizoguchi H."/>
            <person name="Goto Y."/>
            <person name="Shimizu F."/>
            <person name="Wakebe H."/>
            <person name="Hishigaki H."/>
            <person name="Watanabe T."/>
            <person name="Sugiyama A."/>
            <person name="Takemoto M."/>
            <person name="Kawakami B."/>
            <person name="Yamazaki M."/>
            <person name="Watanabe K."/>
            <person name="Kumagai A."/>
            <person name="Itakura S."/>
            <person name="Fukuzumi Y."/>
            <person name="Fujimori Y."/>
            <person name="Komiyama M."/>
            <person name="Tashiro H."/>
            <person name="Tanigami A."/>
            <person name="Fujiwara T."/>
            <person name="Ono T."/>
            <person name="Yamada K."/>
            <person name="Fujii Y."/>
            <person name="Ozaki K."/>
            <person name="Hirao M."/>
            <person name="Ohmori Y."/>
            <person name="Kawabata A."/>
            <person name="Hikiji T."/>
            <person name="Kobatake N."/>
            <person name="Inagaki H."/>
            <person name="Ikema Y."/>
            <person name="Okamoto S."/>
            <person name="Okitani R."/>
            <person name="Kawakami T."/>
            <person name="Noguchi S."/>
            <person name="Itoh T."/>
            <person name="Shigeta K."/>
            <person name="Senba T."/>
            <person name="Matsumura K."/>
            <person name="Nakajima Y."/>
            <person name="Mizuno T."/>
            <person name="Morinaga M."/>
            <person name="Sasaki M."/>
            <person name="Togashi T."/>
            <person name="Oyama M."/>
            <person name="Hata H."/>
            <person name="Watanabe M."/>
            <person name="Komatsu T."/>
            <person name="Mizushima-Sugano J."/>
            <person name="Satoh T."/>
            <person name="Shirai Y."/>
            <person name="Takahashi Y."/>
            <person name="Nakagawa K."/>
            <person name="Okumura K."/>
            <person name="Nagase T."/>
            <person name="Nomura N."/>
            <person name="Kikuchi H."/>
            <person name="Masuho Y."/>
            <person name="Yamashita R."/>
            <person name="Nakai K."/>
            <person name="Yada T."/>
            <person name="Nakamura Y."/>
            <person name="Ohara O."/>
            <person name="Isogai T."/>
            <person name="Sugano S."/>
        </authorList>
    </citation>
    <scope>NUCLEOTIDE SEQUENCE [LARGE SCALE MRNA] (ISOFORMS 1 AND 2)</scope>
    <source>
        <tissue>Brain</tissue>
    </source>
</reference>
<reference key="5">
    <citation type="journal article" date="2003" name="Nature">
        <title>The DNA sequence and analysis of human chromosome 14.</title>
        <authorList>
            <person name="Heilig R."/>
            <person name="Eckenberg R."/>
            <person name="Petit J.-L."/>
            <person name="Fonknechten N."/>
            <person name="Da Silva C."/>
            <person name="Cattolico L."/>
            <person name="Levy M."/>
            <person name="Barbe V."/>
            <person name="De Berardinis V."/>
            <person name="Ureta-Vidal A."/>
            <person name="Pelletier E."/>
            <person name="Vico V."/>
            <person name="Anthouard V."/>
            <person name="Rowen L."/>
            <person name="Madan A."/>
            <person name="Qin S."/>
            <person name="Sun H."/>
            <person name="Du H."/>
            <person name="Pepin K."/>
            <person name="Artiguenave F."/>
            <person name="Robert C."/>
            <person name="Cruaud C."/>
            <person name="Bruels T."/>
            <person name="Jaillon O."/>
            <person name="Friedlander L."/>
            <person name="Samson G."/>
            <person name="Brottier P."/>
            <person name="Cure S."/>
            <person name="Segurens B."/>
            <person name="Aniere F."/>
            <person name="Samain S."/>
            <person name="Crespeau H."/>
            <person name="Abbasi N."/>
            <person name="Aiach N."/>
            <person name="Boscus D."/>
            <person name="Dickhoff R."/>
            <person name="Dors M."/>
            <person name="Dubois I."/>
            <person name="Friedman C."/>
            <person name="Gouyvenoux M."/>
            <person name="James R."/>
            <person name="Madan A."/>
            <person name="Mairey-Estrada B."/>
            <person name="Mangenot S."/>
            <person name="Martins N."/>
            <person name="Menard M."/>
            <person name="Oztas S."/>
            <person name="Ratcliffe A."/>
            <person name="Shaffer T."/>
            <person name="Trask B."/>
            <person name="Vacherie B."/>
            <person name="Bellemere C."/>
            <person name="Belser C."/>
            <person name="Besnard-Gonnet M."/>
            <person name="Bartol-Mavel D."/>
            <person name="Boutard M."/>
            <person name="Briez-Silla S."/>
            <person name="Combette S."/>
            <person name="Dufosse-Laurent V."/>
            <person name="Ferron C."/>
            <person name="Lechaplais C."/>
            <person name="Louesse C."/>
            <person name="Muselet D."/>
            <person name="Magdelenat G."/>
            <person name="Pateau E."/>
            <person name="Petit E."/>
            <person name="Sirvain-Trukniewicz P."/>
            <person name="Trybou A."/>
            <person name="Vega-Czarny N."/>
            <person name="Bataille E."/>
            <person name="Bluet E."/>
            <person name="Bordelais I."/>
            <person name="Dubois M."/>
            <person name="Dumont C."/>
            <person name="Guerin T."/>
            <person name="Haffray S."/>
            <person name="Hammadi R."/>
            <person name="Muanga J."/>
            <person name="Pellouin V."/>
            <person name="Robert D."/>
            <person name="Wunderle E."/>
            <person name="Gauguet G."/>
            <person name="Roy A."/>
            <person name="Sainte-Marthe L."/>
            <person name="Verdier J."/>
            <person name="Verdier-Discala C."/>
            <person name="Hillier L.W."/>
            <person name="Fulton L."/>
            <person name="McPherson J."/>
            <person name="Matsuda F."/>
            <person name="Wilson R."/>
            <person name="Scarpelli C."/>
            <person name="Gyapay G."/>
            <person name="Wincker P."/>
            <person name="Saurin W."/>
            <person name="Quetier F."/>
            <person name="Waterston R."/>
            <person name="Hood L."/>
            <person name="Weissenbach J."/>
        </authorList>
    </citation>
    <scope>NUCLEOTIDE SEQUENCE [LARGE SCALE GENOMIC DNA]</scope>
</reference>
<reference key="6">
    <citation type="submission" date="2005-07" db="EMBL/GenBank/DDBJ databases">
        <authorList>
            <person name="Mural R.J."/>
            <person name="Istrail S."/>
            <person name="Sutton G.G."/>
            <person name="Florea L."/>
            <person name="Halpern A.L."/>
            <person name="Mobarry C.M."/>
            <person name="Lippert R."/>
            <person name="Walenz B."/>
            <person name="Shatkay H."/>
            <person name="Dew I."/>
            <person name="Miller J.R."/>
            <person name="Flanigan M.J."/>
            <person name="Edwards N.J."/>
            <person name="Bolanos R."/>
            <person name="Fasulo D."/>
            <person name="Halldorsson B.V."/>
            <person name="Hannenhalli S."/>
            <person name="Turner R."/>
            <person name="Yooseph S."/>
            <person name="Lu F."/>
            <person name="Nusskern D.R."/>
            <person name="Shue B.C."/>
            <person name="Zheng X.H."/>
            <person name="Zhong F."/>
            <person name="Delcher A.L."/>
            <person name="Huson D.H."/>
            <person name="Kravitz S.A."/>
            <person name="Mouchard L."/>
            <person name="Reinert K."/>
            <person name="Remington K.A."/>
            <person name="Clark A.G."/>
            <person name="Waterman M.S."/>
            <person name="Eichler E.E."/>
            <person name="Adams M.D."/>
            <person name="Hunkapiller M.W."/>
            <person name="Myers E.W."/>
            <person name="Venter J.C."/>
        </authorList>
    </citation>
    <scope>NUCLEOTIDE SEQUENCE [LARGE SCALE GENOMIC DNA]</scope>
</reference>
<reference key="7">
    <citation type="journal article" date="2004" name="Genome Res.">
        <title>The status, quality, and expansion of the NIH full-length cDNA project: the Mammalian Gene Collection (MGC).</title>
        <authorList>
            <consortium name="The MGC Project Team"/>
        </authorList>
    </citation>
    <scope>NUCLEOTIDE SEQUENCE [LARGE SCALE MRNA] (ISOFORM 1)</scope>
    <source>
        <tissue>Lung</tissue>
    </source>
</reference>
<reference key="8">
    <citation type="journal article" date="2009" name="Proc. Natl. Acad. Sci. U.S.A.">
        <title>Global profiling of protease cleavage sites by chemoselective labeling of protein N-termini.</title>
        <authorList>
            <person name="Xu G."/>
            <person name="Shin S.B."/>
            <person name="Jaffrey S.R."/>
        </authorList>
    </citation>
    <scope>PROTEIN SEQUENCE [LARGE SCALE ANALYSIS] OF 68-89</scope>
    <source>
        <tissue>Leukemic T-cell</tissue>
    </source>
</reference>
<reference key="9">
    <citation type="journal article" date="2011" name="BMC Syst. Biol.">
        <title>Initial characterization of the human central proteome.</title>
        <authorList>
            <person name="Burkard T.R."/>
            <person name="Planyavsky M."/>
            <person name="Kaupe I."/>
            <person name="Breitwieser F.P."/>
            <person name="Buerckstuemmer T."/>
            <person name="Bennett K.L."/>
            <person name="Superti-Furga G."/>
            <person name="Colinge J."/>
        </authorList>
    </citation>
    <scope>IDENTIFICATION BY MASS SPECTROMETRY [LARGE SCALE ANALYSIS]</scope>
</reference>
<reference key="10">
    <citation type="journal article" date="2014" name="J. Proteomics">
        <title>An enzyme assisted RP-RPLC approach for in-depth analysis of human liver phosphoproteome.</title>
        <authorList>
            <person name="Bian Y."/>
            <person name="Song C."/>
            <person name="Cheng K."/>
            <person name="Dong M."/>
            <person name="Wang F."/>
            <person name="Huang J."/>
            <person name="Sun D."/>
            <person name="Wang L."/>
            <person name="Ye M."/>
            <person name="Zou H."/>
        </authorList>
    </citation>
    <scope>IDENTIFICATION BY MASS SPECTROMETRY [LARGE SCALE ANALYSIS]</scope>
    <source>
        <tissue>Liver</tissue>
    </source>
</reference>
<reference key="11">
    <citation type="journal article" date="2015" name="Proteomics">
        <title>N-terminome analysis of the human mitochondrial proteome.</title>
        <authorList>
            <person name="Vaca Jacome A.S."/>
            <person name="Rabilloud T."/>
            <person name="Schaeffer-Reiss C."/>
            <person name="Rompais M."/>
            <person name="Ayoub D."/>
            <person name="Lane L."/>
            <person name="Bairoch A."/>
            <person name="Van Dorsselaer A."/>
            <person name="Carapito C."/>
        </authorList>
    </citation>
    <scope>IDENTIFICATION BY MASS SPECTROMETRY [LARGE SCALE ANALYSIS]</scope>
</reference>
<reference key="12">
    <citation type="journal article" date="2017" name="Nature">
        <title>KAT2A coupled with the alpha-KGDH complex acts as a histone H3 succinyltransferase.</title>
        <authorList>
            <person name="Wang Y."/>
            <person name="Guo Y.R."/>
            <person name="Liu K."/>
            <person name="Yin Z."/>
            <person name="Liu R."/>
            <person name="Xia Y."/>
            <person name="Tan L."/>
            <person name="Yang P."/>
            <person name="Lee J.H."/>
            <person name="Li X.J."/>
            <person name="Hawke D."/>
            <person name="Zheng Y."/>
            <person name="Qian X."/>
            <person name="Lyu J."/>
            <person name="He J."/>
            <person name="Xing D."/>
            <person name="Tao Y.J."/>
            <person name="Lu Z."/>
        </authorList>
    </citation>
    <scope>FUNCTION</scope>
    <scope>SUBCELLULAR LOCATION</scope>
    <scope>SUBUNIT</scope>
    <scope>MUTAGENESIS OF 224-ARG--LYS-226</scope>
</reference>
<reference key="13">
    <citation type="journal article" date="2020" name="Nat. Commun.">
        <title>ABHD11 maintains 2-oxoglutarate metabolism by preserving functional lipoylation of the 2-oxoglutarate dehydrogenase complex.</title>
        <authorList>
            <person name="Bailey P.S.J."/>
            <person name="Ortmann B.M."/>
            <person name="Martinelli A.W."/>
            <person name="Houghton J.W."/>
            <person name="Costa A.S.H."/>
            <person name="Burr S.P."/>
            <person name="Antrobus R."/>
            <person name="Frezza C."/>
            <person name="Nathan J.A."/>
        </authorList>
    </citation>
    <scope>INTERACTION WITH ABHD11</scope>
</reference>
<reference key="14">
    <citation type="journal article" date="2019" name="Am. J. Hum. Genet.">
        <title>Recurrent germline DLST mutations in individuals with multiple pheochromocytomas and paragangliomas.</title>
        <authorList>
            <person name="Remacha L."/>
            <person name="Pirman D."/>
            <person name="Mahoney C.E."/>
            <person name="Coloma J."/>
            <person name="Calsina B."/>
            <person name="Curras-Freixes M."/>
            <person name="Leton R."/>
            <person name="Torres-Perez R."/>
            <person name="Richter S."/>
            <person name="Pita G."/>
            <person name="Herraez B."/>
            <person name="Cianchetta G."/>
            <person name="Honrado E."/>
            <person name="Maestre L."/>
            <person name="Urioste M."/>
            <person name="Aller J."/>
            <person name="Garcia-Uriarte O."/>
            <person name="Galvez M.A."/>
            <person name="Luque R.M."/>
            <person name="Lahera M."/>
            <person name="Moreno-Rengel C."/>
            <person name="Eisenhofer G."/>
            <person name="Montero-Conde C."/>
            <person name="Rodriguez-Antona C."/>
            <person name="Llorca O."/>
            <person name="Smolen G.A."/>
            <person name="Robledo M."/>
            <person name="Cascon A."/>
        </authorList>
    </citation>
    <scope>INVOLVEMENT IN PPGL7</scope>
    <scope>VARIANTS PPGL7 GLN-231; GLU-374 AND CYS-422</scope>
    <scope>VARIANT ASN-304</scope>
    <scope>CHARACTERIZATION OF VARIANTS PPGL7 GLN-231; GLU-374 AND CYS-422</scope>
    <scope>CHARACTERIZATION OF VARIANT ASN-304</scope>
    <scope>FUNCTION</scope>
    <scope>CATALYTIC ACTIVITY</scope>
    <scope>PATHWAY</scope>
    <scope>MUTAGENESIS OF HIS-424</scope>
    <scope>ACTIVE SITE</scope>
</reference>
<organism>
    <name type="scientific">Homo sapiens</name>
    <name type="common">Human</name>
    <dbReference type="NCBI Taxonomy" id="9606"/>
    <lineage>
        <taxon>Eukaryota</taxon>
        <taxon>Metazoa</taxon>
        <taxon>Chordata</taxon>
        <taxon>Craniata</taxon>
        <taxon>Vertebrata</taxon>
        <taxon>Euteleostomi</taxon>
        <taxon>Mammalia</taxon>
        <taxon>Eutheria</taxon>
        <taxon>Euarchontoglires</taxon>
        <taxon>Primates</taxon>
        <taxon>Haplorrhini</taxon>
        <taxon>Catarrhini</taxon>
        <taxon>Hominidae</taxon>
        <taxon>Homo</taxon>
    </lineage>
</organism>
<comment type="function">
    <text evidence="7 8">Dihydrolipoamide succinyltransferase (E2) component of the 2-oxoglutarate dehydrogenase complex. The 2-oxoglutarate dehydrogenase complex catalyzes the overall conversion of 2-oxoglutarate to succinyl-CoA and CO(2). The 2-oxoglutarate dehydrogenase complex is mainly active in the mitochondrion (PubMed:29211711, PubMed:30929736). A fraction of the 2-oxoglutarate dehydrogenase complex also localizes in the nucleus and is required for lysine succinylation of histones: associates with KAT2A on chromatin and provides succinyl-CoA to histone succinyltransferase KAT2A (PubMed:29211711).</text>
</comment>
<comment type="catalytic activity">
    <reaction evidence="8">
        <text>N(6)-[(R)-dihydrolipoyl]-L-lysyl-[protein] + succinyl-CoA = N(6)-[(R)-S(8)-succinyldihydrolipoyl]-L-lysyl-[protein] + CoA</text>
        <dbReference type="Rhea" id="RHEA:15213"/>
        <dbReference type="Rhea" id="RHEA-COMP:10475"/>
        <dbReference type="Rhea" id="RHEA-COMP:20092"/>
        <dbReference type="ChEBI" id="CHEBI:57287"/>
        <dbReference type="ChEBI" id="CHEBI:57292"/>
        <dbReference type="ChEBI" id="CHEBI:83100"/>
        <dbReference type="ChEBI" id="CHEBI:83120"/>
        <dbReference type="EC" id="2.3.1.61"/>
    </reaction>
    <physiologicalReaction direction="right-to-left" evidence="15">
        <dbReference type="Rhea" id="RHEA:15215"/>
    </physiologicalReaction>
</comment>
<comment type="cofactor">
    <cofactor evidence="1">
        <name>(R)-lipoate</name>
        <dbReference type="ChEBI" id="CHEBI:83088"/>
    </cofactor>
    <text evidence="1">Binds 1 lipoyl cofactor covalently.</text>
</comment>
<comment type="pathway">
    <text>Amino-acid degradation; L-lysine degradation via saccharopine pathway; glutaryl-CoA from L-lysine: step 6/6.</text>
</comment>
<comment type="pathway">
    <text evidence="8">Carbohydrate metabolism; tricarboxylic acid cycle.</text>
</comment>
<comment type="subunit">
    <text evidence="2 7 9">The 2-oxoglutarate dehydrogenase complex is composed of OGDH (2-oxoglutarate dehydrogenase; E1), DLST (dihydrolipoamide succinyltransferase; E2), DLD (dihydrolipoamide dehydrogenase; E3) and the assembly factor KGD4 (By similarity). It contains multiple copies of the three enzymatic components (E1, E2 and E3). In the nucleus, the 2-oxoglutarate dehydrogenase complex associates with KAT2A (PubMed:29211711). Interacts with ABHD11; this interaction maintains the functional lipoylation of the 2-oxoglutarate dehydrogenase complex (PubMed:32792488).</text>
</comment>
<comment type="interaction">
    <interactant intactId="EBI-351007">
        <id>P36957</id>
    </interactant>
    <interactant intactId="EBI-13062134">
        <id>Q8N1W1-4</id>
        <label>ARHGEF28</label>
    </interactant>
    <organismsDiffer>false</organismsDiffer>
    <experiments>3</experiments>
</comment>
<comment type="interaction">
    <interactant intactId="EBI-351007">
        <id>P36957</id>
    </interactant>
    <interactant intactId="EBI-747505">
        <id>Q8TAB5</id>
        <label>C1orf216</label>
    </interactant>
    <organismsDiffer>false</organismsDiffer>
    <experiments>3</experiments>
</comment>
<comment type="interaction">
    <interactant intactId="EBI-351007">
        <id>P36957</id>
    </interactant>
    <interactant intactId="EBI-10176008">
        <id>O94983-5</id>
        <label>CAMTA2</label>
    </interactant>
    <organismsDiffer>false</organismsDiffer>
    <experiments>3</experiments>
</comment>
<comment type="interaction">
    <interactant intactId="EBI-351007">
        <id>P36957</id>
    </interactant>
    <interactant intactId="EBI-444308">
        <id>P06493</id>
        <label>CDK1</label>
    </interactant>
    <organismsDiffer>false</organismsDiffer>
    <experiments>3</experiments>
</comment>
<comment type="interaction">
    <interactant intactId="EBI-351007">
        <id>P36957</id>
    </interactant>
    <interactant intactId="EBI-743073">
        <id>O75175</id>
        <label>CNOT3</label>
    </interactant>
    <organismsDiffer>false</organismsDiffer>
    <experiments>3</experiments>
</comment>
<comment type="interaction">
    <interactant intactId="EBI-351007">
        <id>P36957</id>
    </interactant>
    <interactant intactId="EBI-21670927">
        <id>Q6UXH1-2</id>
        <label>CRELD2</label>
    </interactant>
    <organismsDiffer>false</organismsDiffer>
    <experiments>3</experiments>
</comment>
<comment type="interaction">
    <interactant intactId="EBI-351007">
        <id>P36957</id>
    </interactant>
    <interactant intactId="EBI-20894690">
        <id>P49184</id>
        <label>DNASE1L1</label>
    </interactant>
    <organismsDiffer>false</organismsDiffer>
    <experiments>3</experiments>
</comment>
<comment type="interaction">
    <interactant intactId="EBI-351007">
        <id>P36957</id>
    </interactant>
    <interactant intactId="EBI-10262896">
        <id>Q8IY82</id>
        <label>DRC7</label>
    </interactant>
    <organismsDiffer>false</organismsDiffer>
    <experiments>3</experiments>
</comment>
<comment type="interaction">
    <interactant intactId="EBI-351007">
        <id>P36957</id>
    </interactant>
    <interactant intactId="EBI-3924130">
        <id>Q99944</id>
        <label>EGFL8</label>
    </interactant>
    <organismsDiffer>false</organismsDiffer>
    <experiments>3</experiments>
</comment>
<comment type="interaction">
    <interactant intactId="EBI-351007">
        <id>P36957</id>
    </interactant>
    <interactant intactId="EBI-1171184">
        <id>P16422</id>
        <label>EPCAM</label>
    </interactant>
    <organismsDiffer>false</organismsDiffer>
    <experiments>3</experiments>
</comment>
<comment type="interaction">
    <interactant intactId="EBI-351007">
        <id>P36957</id>
    </interactant>
    <interactant intactId="EBI-10314666">
        <id>Q9NVM1</id>
        <label>EVA1B</label>
    </interactant>
    <organismsDiffer>false</organismsDiffer>
    <experiments>3</experiments>
</comment>
<comment type="interaction">
    <interactant intactId="EBI-351007">
        <id>P36957</id>
    </interactant>
    <interactant intactId="EBI-21647872">
        <id>Q96GK7</id>
        <label>FAHD2A</label>
    </interactant>
    <organismsDiffer>false</organismsDiffer>
    <experiments>3</experiments>
</comment>
<comment type="interaction">
    <interactant intactId="EBI-351007">
        <id>P36957</id>
    </interactant>
    <interactant intactId="EBI-9090702">
        <id>Q10981</id>
        <label>FUT2</label>
    </interactant>
    <organismsDiffer>false</organismsDiffer>
    <experiments>3</experiments>
</comment>
<comment type="interaction">
    <interactant intactId="EBI-351007">
        <id>P36957</id>
    </interactant>
    <interactant intactId="EBI-750433">
        <id>P36382</id>
        <label>GJA5</label>
    </interactant>
    <organismsDiffer>false</organismsDiffer>
    <experiments>3</experiments>
</comment>
<comment type="interaction">
    <interactant intactId="EBI-351007">
        <id>P36957</id>
    </interactant>
    <interactant intactId="EBI-715087">
        <id>P09471</id>
        <label>GNAO1</label>
    </interactant>
    <organismsDiffer>false</organismsDiffer>
    <experiments>3</experiments>
</comment>
<comment type="interaction">
    <interactant intactId="EBI-351007">
        <id>P36957</id>
    </interactant>
    <interactant intactId="EBI-3910269">
        <id>P79483</id>
        <label>HLA-DRB3</label>
    </interactant>
    <organismsDiffer>false</organismsDiffer>
    <experiments>3</experiments>
</comment>
<comment type="interaction">
    <interactant intactId="EBI-351007">
        <id>P36957</id>
    </interactant>
    <interactant intactId="EBI-17426018">
        <id>P14060</id>
        <label>HSD3B1</label>
    </interactant>
    <organismsDiffer>false</organismsDiffer>
    <experiments>3</experiments>
</comment>
<comment type="interaction">
    <interactant intactId="EBI-351007">
        <id>P36957</id>
    </interactant>
    <interactant intactId="EBI-466029">
        <id>P42858</id>
        <label>HTT</label>
    </interactant>
    <organismsDiffer>false</organismsDiffer>
    <experiments>3</experiments>
</comment>
<comment type="interaction">
    <interactant intactId="EBI-351007">
        <id>P36957</id>
    </interactant>
    <interactant intactId="EBI-10975491">
        <id>Q7Z6Z7-2</id>
        <label>HUWE1</label>
    </interactant>
    <organismsDiffer>false</organismsDiffer>
    <experiments>3</experiments>
</comment>
<comment type="interaction">
    <interactant intactId="EBI-351007">
        <id>P36957</id>
    </interactant>
    <interactant intactId="EBI-715695">
        <id>O75874</id>
        <label>IDH1</label>
    </interactant>
    <organismsDiffer>false</organismsDiffer>
    <experiments>3</experiments>
</comment>
<comment type="interaction">
    <interactant intactId="EBI-351007">
        <id>P36957</id>
    </interactant>
    <interactant intactId="EBI-2557660">
        <id>Q9ULR0</id>
        <label>ISY1</label>
    </interactant>
    <organismsDiffer>false</organismsDiffer>
    <experiments>3</experiments>
</comment>
<comment type="interaction">
    <interactant intactId="EBI-351007">
        <id>P36957</id>
    </interactant>
    <interactant intactId="EBI-10171456">
        <id>A0JP07</id>
        <label>KIAA1683</label>
    </interactant>
    <organismsDiffer>false</organismsDiffer>
    <experiments>3</experiments>
</comment>
<comment type="interaction">
    <interactant intactId="EBI-351007">
        <id>P36957</id>
    </interactant>
    <interactant intactId="EBI-9018187">
        <id>P26715</id>
        <label>KLRC1</label>
    </interactant>
    <organismsDiffer>false</organismsDiffer>
    <experiments>3</experiments>
</comment>
<comment type="interaction">
    <interactant intactId="EBI-351007">
        <id>P36957</id>
    </interactant>
    <interactant intactId="EBI-11750531">
        <id>Q6P5S2</id>
        <label>LEG1</label>
    </interactant>
    <organismsDiffer>false</organismsDiffer>
    <experiments>3</experiments>
</comment>
<comment type="interaction">
    <interactant intactId="EBI-351007">
        <id>P36957</id>
    </interactant>
    <interactant intactId="EBI-1048875">
        <id>P09382</id>
        <label>LGALS1</label>
    </interactant>
    <organismsDiffer>false</organismsDiffer>
    <experiments>3</experiments>
</comment>
<comment type="interaction">
    <interactant intactId="EBI-351007">
        <id>P36957</id>
    </interactant>
    <interactant intactId="EBI-12069522">
        <id>O00214-2</id>
        <label>LGALS8</label>
    </interactant>
    <organismsDiffer>false</organismsDiffer>
    <experiments>3</experiments>
</comment>
<comment type="interaction">
    <interactant intactId="EBI-351007">
        <id>P36957</id>
    </interactant>
    <interactant intactId="EBI-5650739">
        <id>P43356</id>
        <label>MAGEA2B</label>
    </interactant>
    <organismsDiffer>false</organismsDiffer>
    <experiments>3</experiments>
</comment>
<comment type="interaction">
    <interactant intactId="EBI-351007">
        <id>P36957</id>
    </interactant>
    <interactant intactId="EBI-995373">
        <id>Q7Z434</id>
        <label>MAVS</label>
    </interactant>
    <organismsDiffer>false</organismsDiffer>
    <experiments>3</experiments>
</comment>
<comment type="interaction">
    <interactant intactId="EBI-351007">
        <id>P36957</id>
    </interactant>
    <interactant intactId="EBI-744790">
        <id>Q8NCR3</id>
        <label>MFI</label>
    </interactant>
    <organismsDiffer>false</organismsDiffer>
    <experiments>3</experiments>
</comment>
<comment type="interaction">
    <interactant intactId="EBI-351007">
        <id>P36957</id>
    </interactant>
    <interactant intactId="EBI-25834188">
        <id>Q8TB02</id>
        <label>MGC39372</label>
    </interactant>
    <organismsDiffer>false</organismsDiffer>
    <experiments>3</experiments>
</comment>
<comment type="interaction">
    <interactant intactId="EBI-351007">
        <id>P36957</id>
    </interactant>
    <interactant intactId="EBI-7825413">
        <id>Q96EY8</id>
        <label>MMAB</label>
    </interactant>
    <organismsDiffer>false</organismsDiffer>
    <experiments>3</experiments>
</comment>
<comment type="interaction">
    <interactant intactId="EBI-351007">
        <id>P36957</id>
    </interactant>
    <interactant intactId="EBI-9088235">
        <id>A2RUH7</id>
        <label>MYBPHL</label>
    </interactant>
    <organismsDiffer>false</organismsDiffer>
    <experiments>3</experiments>
</comment>
<comment type="interaction">
    <interactant intactId="EBI-351007">
        <id>P36957</id>
    </interactant>
    <interactant intactId="EBI-3446748">
        <id>Q9NPC7</id>
        <label>MYNN</label>
    </interactant>
    <organismsDiffer>false</organismsDiffer>
    <experiments>3</experiments>
</comment>
<comment type="interaction">
    <interactant intactId="EBI-351007">
        <id>P36957</id>
    </interactant>
    <interactant intactId="EBI-356392">
        <id>P55209</id>
        <label>NAP1L1</label>
    </interactant>
    <organismsDiffer>false</organismsDiffer>
    <experiments>3</experiments>
</comment>
<comment type="interaction">
    <interactant intactId="EBI-351007">
        <id>P36957</id>
    </interactant>
    <interactant intactId="EBI-11750983">
        <id>Q9HC98-4</id>
        <label>NEK6</label>
    </interactant>
    <organismsDiffer>false</organismsDiffer>
    <experiments>3</experiments>
</comment>
<comment type="interaction">
    <interactant intactId="EBI-351007">
        <id>P36957</id>
    </interactant>
    <interactant intactId="EBI-12305293">
        <id>Q8NCF5-2</id>
        <label>NFATC2IP</label>
    </interactant>
    <organismsDiffer>false</organismsDiffer>
    <experiments>3</experiments>
</comment>
<comment type="interaction">
    <interactant intactId="EBI-351007">
        <id>P36957</id>
    </interactant>
    <interactant intactId="EBI-6253230">
        <id>Q96P20</id>
        <label>NLRP3</label>
    </interactant>
    <organismsDiffer>false</organismsDiffer>
    <experiments>3</experiments>
</comment>
<comment type="interaction">
    <interactant intactId="EBI-351007">
        <id>P36957</id>
    </interactant>
    <interactant intactId="EBI-25834085">
        <id>Q8N323</id>
        <label>NXPE1</label>
    </interactant>
    <organismsDiffer>false</organismsDiffer>
    <experiments>3</experiments>
</comment>
<comment type="interaction">
    <interactant intactId="EBI-351007">
        <id>P36957</id>
    </interactant>
    <interactant intactId="EBI-9091052">
        <id>Q6P4D5-2</id>
        <label>PABIR3</label>
    </interactant>
    <organismsDiffer>false</organismsDiffer>
    <experiments>3</experiments>
</comment>
<comment type="interaction">
    <interactant intactId="EBI-351007">
        <id>P36957</id>
    </interactant>
    <interactant intactId="EBI-473160">
        <id>Q8N2W9</id>
        <label>PIAS4</label>
    </interactant>
    <organismsDiffer>false</organismsDiffer>
    <experiments>3</experiments>
</comment>
<comment type="interaction">
    <interactant intactId="EBI-351007">
        <id>P36957</id>
    </interactant>
    <interactant intactId="EBI-2557132">
        <id>Q8NBT0</id>
        <label>POC1A</label>
    </interactant>
    <organismsDiffer>false</organismsDiffer>
    <experiments>3</experiments>
</comment>
<comment type="interaction">
    <interactant intactId="EBI-351007">
        <id>P36957</id>
    </interactant>
    <interactant intactId="EBI-2931238">
        <id>O14829</id>
        <label>PPEF1</label>
    </interactant>
    <organismsDiffer>false</organismsDiffer>
    <experiments>3</experiments>
</comment>
<comment type="interaction">
    <interactant intactId="EBI-351007">
        <id>P36957</id>
    </interactant>
    <interactant intactId="EBI-2860740">
        <id>Q96QH2</id>
        <label>PRAM1</label>
    </interactant>
    <organismsDiffer>false</organismsDiffer>
    <experiments>3</experiments>
</comment>
<comment type="interaction">
    <interactant intactId="EBI-351007">
        <id>P36957</id>
    </interactant>
    <interactant intactId="EBI-709652">
        <id>Q9Y617</id>
        <label>PSAT1</label>
    </interactant>
    <organismsDiffer>false</organismsDiffer>
    <experiments>3</experiments>
</comment>
<comment type="interaction">
    <interactant intactId="EBI-351007">
        <id>P36957</id>
    </interactant>
    <interactant intactId="EBI-743997">
        <id>P43686</id>
        <label>PSMC4</label>
    </interactant>
    <organismsDiffer>false</organismsDiffer>
    <experiments>5</experiments>
</comment>
<comment type="interaction">
    <interactant intactId="EBI-351007">
        <id>P36957</id>
    </interactant>
    <interactant intactId="EBI-357648">
        <id>Q13200</id>
        <label>PSMD2</label>
    </interactant>
    <organismsDiffer>false</organismsDiffer>
    <experiments>3</experiments>
</comment>
<comment type="interaction">
    <interactant intactId="EBI-351007">
        <id>P36957</id>
    </interactant>
    <interactant intactId="EBI-3397474">
        <id>Q9Y3Y4</id>
        <label>PYGO1</label>
    </interactant>
    <organismsDiffer>false</organismsDiffer>
    <experiments>3</experiments>
</comment>
<comment type="interaction">
    <interactant intactId="EBI-351007">
        <id>P36957</id>
    </interactant>
    <interactant intactId="EBI-725987">
        <id>Q13636</id>
        <label>RAB31</label>
    </interactant>
    <organismsDiffer>false</organismsDiffer>
    <experiments>3</experiments>
</comment>
<comment type="interaction">
    <interactant intactId="EBI-351007">
        <id>P36957</id>
    </interactant>
    <interactant intactId="EBI-4287022">
        <id>Q96E17</id>
        <label>RAB3C</label>
    </interactant>
    <organismsDiffer>false</organismsDiffer>
    <experiments>3</experiments>
</comment>
<comment type="interaction">
    <interactant intactId="EBI-351007">
        <id>P36957</id>
    </interactant>
    <interactant intactId="EBI-358143">
        <id>P61224</id>
        <label>RAP1B</label>
    </interactant>
    <organismsDiffer>false</organismsDiffer>
    <experiments>3</experiments>
</comment>
<comment type="interaction">
    <interactant intactId="EBI-351007">
        <id>P36957</id>
    </interactant>
    <interactant intactId="EBI-960081">
        <id>P50749</id>
        <label>RASSF2</label>
    </interactant>
    <organismsDiffer>false</organismsDiffer>
    <experiments>3</experiments>
</comment>
<comment type="interaction">
    <interactant intactId="EBI-351007">
        <id>P36957</id>
    </interactant>
    <interactant intactId="EBI-740272">
        <id>Q96I25</id>
        <label>RBM17</label>
    </interactant>
    <organismsDiffer>false</organismsDiffer>
    <experiments>3</experiments>
</comment>
<comment type="interaction">
    <interactant intactId="EBI-351007">
        <id>P36957</id>
    </interactant>
    <interactant intactId="EBI-714003">
        <id>P52756</id>
        <label>RBM5</label>
    </interactant>
    <organismsDiffer>false</organismsDiffer>
    <experiments>3</experiments>
</comment>
<comment type="interaction">
    <interactant intactId="EBI-351007">
        <id>P36957</id>
    </interactant>
    <interactant intactId="EBI-359174">
        <id>Q02978</id>
        <label>SLC25A11</label>
    </interactant>
    <organismsDiffer>false</organismsDiffer>
    <experiments>3</experiments>
</comment>
<comment type="interaction">
    <interactant intactId="EBI-351007">
        <id>P36957</id>
    </interactant>
    <interactant intactId="EBI-11175533">
        <id>Q3SY56</id>
        <label>SP6</label>
    </interactant>
    <organismsDiffer>false</organismsDiffer>
    <experiments>3</experiments>
</comment>
<comment type="interaction">
    <interactant intactId="EBI-351007">
        <id>P36957</id>
    </interactant>
    <interactant intactId="EBI-13322423">
        <id>Q96L03</id>
        <label>SPATA17</label>
    </interactant>
    <organismsDiffer>false</organismsDiffer>
    <experiments>3</experiments>
</comment>
<comment type="interaction">
    <interactant intactId="EBI-351007">
        <id>P36957</id>
    </interactant>
    <interactant intactId="EBI-7082156">
        <id>Q7Z698</id>
        <label>SPRED2</label>
    </interactant>
    <organismsDiffer>false</organismsDiffer>
    <experiments>3</experiments>
</comment>
<comment type="interaction">
    <interactant intactId="EBI-351007">
        <id>P36957</id>
    </interactant>
    <interactant intactId="EBI-25833693">
        <id>F6Y2X3</id>
        <label>TAFAZZIN</label>
    </interactant>
    <organismsDiffer>false</organismsDiffer>
    <experiments>3</experiments>
</comment>
<comment type="interaction">
    <interactant intactId="EBI-351007">
        <id>P36957</id>
    </interactant>
    <interactant intactId="EBI-743494">
        <id>P48775</id>
        <label>TDO2</label>
    </interactant>
    <organismsDiffer>false</organismsDiffer>
    <experiments>3</experiments>
</comment>
<comment type="interaction">
    <interactant intactId="EBI-351007">
        <id>P36957</id>
    </interactant>
    <interactant intactId="EBI-741350">
        <id>Q9BT49</id>
        <label>THAP7</label>
    </interactant>
    <organismsDiffer>false</organismsDiffer>
    <experiments>3</experiments>
</comment>
<comment type="interaction">
    <interactant intactId="EBI-351007">
        <id>P36957</id>
    </interactant>
    <interactant intactId="EBI-2530931">
        <id>P49746</id>
        <label>THBS3</label>
    </interactant>
    <organismsDiffer>false</organismsDiffer>
    <experiments>3</experiments>
</comment>
<comment type="interaction">
    <interactant intactId="EBI-351007">
        <id>P36957</id>
    </interactant>
    <interactant intactId="EBI-25833898">
        <id>Q96JJ7-2</id>
        <label>TMX3</label>
    </interactant>
    <organismsDiffer>false</organismsDiffer>
    <experiments>3</experiments>
</comment>
<comment type="interaction">
    <interactant intactId="EBI-351007">
        <id>P36957</id>
    </interactant>
    <interactant intactId="EBI-12003398">
        <id>Q9H2S6-2</id>
        <label>TNMD</label>
    </interactant>
    <organismsDiffer>false</organismsDiffer>
    <experiments>3</experiments>
</comment>
<comment type="interaction">
    <interactant intactId="EBI-351007">
        <id>P36957</id>
    </interactant>
    <interactant intactId="EBI-9091010">
        <id>Q68CL5-3</id>
        <label>TPGS2</label>
    </interactant>
    <organismsDiffer>false</organismsDiffer>
    <experiments>3</experiments>
</comment>
<comment type="interaction">
    <interactant intactId="EBI-351007">
        <id>P36957</id>
    </interactant>
    <interactant intactId="EBI-1037322">
        <id>Q9ULW0</id>
        <label>TPX2</label>
    </interactant>
    <organismsDiffer>false</organismsDiffer>
    <experiments>3</experiments>
</comment>
<comment type="interaction">
    <interactant intactId="EBI-351007">
        <id>P36957</id>
    </interactant>
    <interactant intactId="EBI-12581310">
        <id>Q9NX07</id>
        <label>TRNAU1AP</label>
    </interactant>
    <organismsDiffer>false</organismsDiffer>
    <experiments>3</experiments>
</comment>
<comment type="interaction">
    <interactant intactId="EBI-351007">
        <id>P36957</id>
    </interactant>
    <interactant intactId="EBI-350864">
        <id>P07437</id>
        <label>TUBB</label>
    </interactant>
    <organismsDiffer>false</organismsDiffer>
    <experiments>3</experiments>
</comment>
<comment type="interaction">
    <interactant intactId="EBI-351007">
        <id>P36957</id>
    </interactant>
    <interactant intactId="EBI-25833730">
        <id>Q7Z780</id>
        <label>U2AF1</label>
    </interactant>
    <organismsDiffer>false</organismsDiffer>
    <experiments>3</experiments>
</comment>
<comment type="interaction">
    <interactant intactId="EBI-351007">
        <id>P36957</id>
    </interactant>
    <interactant intactId="EBI-2511507">
        <id>O75317</id>
        <label>USP12</label>
    </interactant>
    <organismsDiffer>false</organismsDiffer>
    <experiments>3</experiments>
</comment>
<comment type="interaction">
    <interactant intactId="EBI-351007">
        <id>P36957</id>
    </interactant>
    <interactant intactId="EBI-356498">
        <id>P62258</id>
        <label>YWHAE</label>
    </interactant>
    <organismsDiffer>false</organismsDiffer>
    <experiments>4</experiments>
</comment>
<comment type="interaction">
    <interactant intactId="EBI-351007">
        <id>P36957</id>
    </interactant>
    <interactant intactId="EBI-25830993">
        <id>Q96EF9</id>
        <label>ZHX1-C8orf76</label>
    </interactant>
    <organismsDiffer>false</organismsDiffer>
    <experiments>3</experiments>
</comment>
<comment type="interaction">
    <interactant intactId="EBI-351007">
        <id>P36957</id>
    </interactant>
    <interactant intactId="EBI-22013570">
        <id>Q9BQ29</id>
    </interactant>
    <organismsDiffer>false</organismsDiffer>
    <experiments>3</experiments>
</comment>
<comment type="subcellular location">
    <subcellularLocation>
        <location evidence="14">Mitochondrion matrix</location>
    </subcellularLocation>
    <subcellularLocation>
        <location evidence="7">Nucleus</location>
    </subcellularLocation>
    <text evidence="7">Mainly localizes in the mitochondrion. A small fraction localizes to the nucleus, where the 2-oxoglutarate dehydrogenase complex is required for histone succinylation.</text>
</comment>
<comment type="alternative products">
    <event type="alternative splicing"/>
    <isoform>
        <id>P36957-1</id>
        <name>1</name>
        <sequence type="displayed"/>
    </isoform>
    <isoform>
        <id>P36957-2</id>
        <name>2</name>
        <sequence type="described" ref="VSP_056439 VSP_056440"/>
    </isoform>
</comment>
<comment type="disease" evidence="8">
    <disease id="DI-05591">
        <name>Pheochromocytoma/paraganglioma syndrome 7</name>
        <acronym>PPGL7</acronym>
        <description>A form of pheochromocytoma/paraganglioma syndrome, a tumor predisposition syndrome characterized by the development of neuroendocrine tumors, usually in adulthood. Pheochromocytomas are catecholamine-producing tumors that arise from chromaffin cells in the adrenal medulla. Paragangliomas develop from sympathetic paraganglia in the thorax, abdomen, and pelvis, as well as from parasympathetic paraganglia in the head and neck. PPGL7 tumors are generally benign, tend to be abdominal, and often secrete normetanephrine. PPGL7 inheritance is autosomal dominant.</description>
        <dbReference type="MIM" id="618475"/>
    </disease>
    <text>Disease susceptibility is associated with variants affecting the gene represented in this entry.</text>
</comment>
<comment type="similarity">
    <text evidence="13">Belongs to the 2-oxoacid dehydrogenase family.</text>
</comment>